<organism>
    <name type="scientific">Yersinia pseudotuberculosis serotype O:1b (strain IP 31758)</name>
    <dbReference type="NCBI Taxonomy" id="349747"/>
    <lineage>
        <taxon>Bacteria</taxon>
        <taxon>Pseudomonadati</taxon>
        <taxon>Pseudomonadota</taxon>
        <taxon>Gammaproteobacteria</taxon>
        <taxon>Enterobacterales</taxon>
        <taxon>Yersiniaceae</taxon>
        <taxon>Yersinia</taxon>
    </lineage>
</organism>
<evidence type="ECO:0000255" key="1">
    <source>
        <dbReference type="HAMAP-Rule" id="MF_00513"/>
    </source>
</evidence>
<evidence type="ECO:0000305" key="2"/>
<sequence>MKRPDYRTLQALDAVIRERGFERAAQKLCITQSAVSQRIKQLENLFGQPLLVRTVPPRPTEQGQKLLALLHQVELLEEEWLGNDNGVDTPLLLSLAVNADSLATWLLPALKPVLADLPIRLNLQVEDETRTQERLRRGEVVGAVSIQPQPLPSCLVDQLGALDYLFVASKAFAERYFPNGVTRSALLKAPAVAFDHLDDMHQAFLQQNFDLSPGSVPCHIVNSSEAFVQLARQGTTCCMIPHLQIEKELASGELIDLTPGLLQRRMLFWHRFAPESRTMRKVTDALLSYGRQVLRQDSFIGQ</sequence>
<comment type="function">
    <text evidence="1">Controls the transcription of genes involved in arginine and lysine metabolism.</text>
</comment>
<comment type="subunit">
    <text evidence="1">Homodimer.</text>
</comment>
<comment type="similarity">
    <text evidence="2">Belongs to the LysR transcriptional regulatory family.</text>
</comment>
<proteinExistence type="inferred from homology"/>
<feature type="chain" id="PRO_1000060884" description="HTH-type transcriptional regulator ArgP">
    <location>
        <begin position="1"/>
        <end position="302"/>
    </location>
</feature>
<feature type="domain" description="HTH lysR-type" evidence="1">
    <location>
        <begin position="4"/>
        <end position="60"/>
    </location>
</feature>
<feature type="DNA-binding region" description="H-T-H motif" evidence="1">
    <location>
        <begin position="21"/>
        <end position="40"/>
    </location>
</feature>
<accession>A7FF10</accession>
<protein>
    <recommendedName>
        <fullName evidence="1">HTH-type transcriptional regulator ArgP</fullName>
    </recommendedName>
</protein>
<gene>
    <name evidence="1" type="primary">argP</name>
    <name type="synonym">iciA</name>
    <name type="ordered locus">YpsIP31758_0854</name>
</gene>
<reference key="1">
    <citation type="journal article" date="2007" name="PLoS Genet.">
        <title>The complete genome sequence of Yersinia pseudotuberculosis IP31758, the causative agent of Far East scarlet-like fever.</title>
        <authorList>
            <person name="Eppinger M."/>
            <person name="Rosovitz M.J."/>
            <person name="Fricke W.F."/>
            <person name="Rasko D.A."/>
            <person name="Kokorina G."/>
            <person name="Fayolle C."/>
            <person name="Lindler L.E."/>
            <person name="Carniel E."/>
            <person name="Ravel J."/>
        </authorList>
    </citation>
    <scope>NUCLEOTIDE SEQUENCE [LARGE SCALE GENOMIC DNA]</scope>
    <source>
        <strain>IP 31758</strain>
    </source>
</reference>
<dbReference type="EMBL" id="CP000720">
    <property type="protein sequence ID" value="ABS47763.1"/>
    <property type="molecule type" value="Genomic_DNA"/>
</dbReference>
<dbReference type="RefSeq" id="WP_002209958.1">
    <property type="nucleotide sequence ID" value="NC_009708.1"/>
</dbReference>
<dbReference type="SMR" id="A7FF10"/>
<dbReference type="KEGG" id="ypi:YpsIP31758_0854"/>
<dbReference type="HOGENOM" id="CLU_063829_0_0_6"/>
<dbReference type="Proteomes" id="UP000002412">
    <property type="component" value="Chromosome"/>
</dbReference>
<dbReference type="GO" id="GO:0003677">
    <property type="term" value="F:DNA binding"/>
    <property type="evidence" value="ECO:0007669"/>
    <property type="project" value="UniProtKB-UniRule"/>
</dbReference>
<dbReference type="GO" id="GO:0003700">
    <property type="term" value="F:DNA-binding transcription factor activity"/>
    <property type="evidence" value="ECO:0007669"/>
    <property type="project" value="UniProtKB-UniRule"/>
</dbReference>
<dbReference type="CDD" id="cd08428">
    <property type="entry name" value="PBP2_IciA_ArgP"/>
    <property type="match status" value="1"/>
</dbReference>
<dbReference type="FunFam" id="1.10.10.10:FF:000061">
    <property type="entry name" value="HTH-type transcriptional regulator ArgP"/>
    <property type="match status" value="1"/>
</dbReference>
<dbReference type="FunFam" id="3.40.190.290:FF:000002">
    <property type="entry name" value="HTH-type transcriptional regulator ArgP"/>
    <property type="match status" value="1"/>
</dbReference>
<dbReference type="Gene3D" id="3.40.190.290">
    <property type="match status" value="1"/>
</dbReference>
<dbReference type="Gene3D" id="1.10.10.10">
    <property type="entry name" value="Winged helix-like DNA-binding domain superfamily/Winged helix DNA-binding domain"/>
    <property type="match status" value="1"/>
</dbReference>
<dbReference type="HAMAP" id="MF_00513">
    <property type="entry name" value="HTH_type_ArgP"/>
    <property type="match status" value="1"/>
</dbReference>
<dbReference type="InterPro" id="IPR017685">
    <property type="entry name" value="ArgP"/>
</dbReference>
<dbReference type="InterPro" id="IPR023490">
    <property type="entry name" value="ArgP_gammaproteobact"/>
</dbReference>
<dbReference type="InterPro" id="IPR050176">
    <property type="entry name" value="LTTR"/>
</dbReference>
<dbReference type="InterPro" id="IPR005119">
    <property type="entry name" value="LysR_subst-bd"/>
</dbReference>
<dbReference type="InterPro" id="IPR000847">
    <property type="entry name" value="Tscrpt_reg_HTH_LysR"/>
</dbReference>
<dbReference type="InterPro" id="IPR036388">
    <property type="entry name" value="WH-like_DNA-bd_sf"/>
</dbReference>
<dbReference type="InterPro" id="IPR036390">
    <property type="entry name" value="WH_DNA-bd_sf"/>
</dbReference>
<dbReference type="NCBIfam" id="TIGR03298">
    <property type="entry name" value="argP"/>
    <property type="match status" value="1"/>
</dbReference>
<dbReference type="NCBIfam" id="NF002964">
    <property type="entry name" value="PRK03635.1"/>
    <property type="match status" value="1"/>
</dbReference>
<dbReference type="NCBIfam" id="NF009888">
    <property type="entry name" value="PRK13348.1"/>
    <property type="match status" value="1"/>
</dbReference>
<dbReference type="PANTHER" id="PTHR30579:SF2">
    <property type="entry name" value="HTH-TYPE TRANSCRIPTIONAL REGULATOR ARGP"/>
    <property type="match status" value="1"/>
</dbReference>
<dbReference type="PANTHER" id="PTHR30579">
    <property type="entry name" value="TRANSCRIPTIONAL REGULATOR"/>
    <property type="match status" value="1"/>
</dbReference>
<dbReference type="Pfam" id="PF00126">
    <property type="entry name" value="HTH_1"/>
    <property type="match status" value="1"/>
</dbReference>
<dbReference type="Pfam" id="PF03466">
    <property type="entry name" value="LysR_substrate"/>
    <property type="match status" value="1"/>
</dbReference>
<dbReference type="PRINTS" id="PR00039">
    <property type="entry name" value="HTHLYSR"/>
</dbReference>
<dbReference type="SUPFAM" id="SSF53850">
    <property type="entry name" value="Periplasmic binding protein-like II"/>
    <property type="match status" value="1"/>
</dbReference>
<dbReference type="SUPFAM" id="SSF46785">
    <property type="entry name" value="Winged helix' DNA-binding domain"/>
    <property type="match status" value="1"/>
</dbReference>
<dbReference type="PROSITE" id="PS50931">
    <property type="entry name" value="HTH_LYSR"/>
    <property type="match status" value="1"/>
</dbReference>
<name>ARGP_YERP3</name>
<keyword id="KW-0238">DNA-binding</keyword>
<keyword id="KW-0804">Transcription</keyword>
<keyword id="KW-0805">Transcription regulation</keyword>